<dbReference type="EMBL" id="CP000909">
    <property type="protein sequence ID" value="ABY35258.1"/>
    <property type="molecule type" value="Genomic_DNA"/>
</dbReference>
<dbReference type="RefSeq" id="WP_012257912.1">
    <property type="nucleotide sequence ID" value="NC_010175.1"/>
</dbReference>
<dbReference type="RefSeq" id="YP_001635647.1">
    <property type="nucleotide sequence ID" value="NC_010175.1"/>
</dbReference>
<dbReference type="SMR" id="A9WEJ6"/>
<dbReference type="FunCoup" id="A9WEJ6">
    <property type="interactions" value="394"/>
</dbReference>
<dbReference type="STRING" id="324602.Caur_2046"/>
<dbReference type="EnsemblBacteria" id="ABY35258">
    <property type="protein sequence ID" value="ABY35258"/>
    <property type="gene ID" value="Caur_2046"/>
</dbReference>
<dbReference type="KEGG" id="cau:Caur_2046"/>
<dbReference type="PATRIC" id="fig|324602.8.peg.2322"/>
<dbReference type="eggNOG" id="COG0184">
    <property type="taxonomic scope" value="Bacteria"/>
</dbReference>
<dbReference type="HOGENOM" id="CLU_148518_0_0_0"/>
<dbReference type="InParanoid" id="A9WEJ6"/>
<dbReference type="Proteomes" id="UP000002008">
    <property type="component" value="Chromosome"/>
</dbReference>
<dbReference type="GO" id="GO:0022627">
    <property type="term" value="C:cytosolic small ribosomal subunit"/>
    <property type="evidence" value="ECO:0000318"/>
    <property type="project" value="GO_Central"/>
</dbReference>
<dbReference type="GO" id="GO:0019843">
    <property type="term" value="F:rRNA binding"/>
    <property type="evidence" value="ECO:0007669"/>
    <property type="project" value="UniProtKB-UniRule"/>
</dbReference>
<dbReference type="GO" id="GO:0003735">
    <property type="term" value="F:structural constituent of ribosome"/>
    <property type="evidence" value="ECO:0007669"/>
    <property type="project" value="InterPro"/>
</dbReference>
<dbReference type="GO" id="GO:0006412">
    <property type="term" value="P:translation"/>
    <property type="evidence" value="ECO:0007669"/>
    <property type="project" value="UniProtKB-UniRule"/>
</dbReference>
<dbReference type="CDD" id="cd00353">
    <property type="entry name" value="Ribosomal_S15p_S13e"/>
    <property type="match status" value="1"/>
</dbReference>
<dbReference type="FunFam" id="1.10.287.10:FF:000002">
    <property type="entry name" value="30S ribosomal protein S15"/>
    <property type="match status" value="1"/>
</dbReference>
<dbReference type="Gene3D" id="6.10.250.3130">
    <property type="match status" value="1"/>
</dbReference>
<dbReference type="Gene3D" id="1.10.287.10">
    <property type="entry name" value="S15/NS1, RNA-binding"/>
    <property type="match status" value="1"/>
</dbReference>
<dbReference type="HAMAP" id="MF_01343_B">
    <property type="entry name" value="Ribosomal_uS15_B"/>
    <property type="match status" value="1"/>
</dbReference>
<dbReference type="InterPro" id="IPR000589">
    <property type="entry name" value="Ribosomal_uS15"/>
</dbReference>
<dbReference type="InterPro" id="IPR005290">
    <property type="entry name" value="Ribosomal_uS15_bac-type"/>
</dbReference>
<dbReference type="InterPro" id="IPR009068">
    <property type="entry name" value="uS15_NS1_RNA-bd_sf"/>
</dbReference>
<dbReference type="NCBIfam" id="TIGR00952">
    <property type="entry name" value="S15_bact"/>
    <property type="match status" value="1"/>
</dbReference>
<dbReference type="PANTHER" id="PTHR23321">
    <property type="entry name" value="RIBOSOMAL PROTEIN S15, BACTERIAL AND ORGANELLAR"/>
    <property type="match status" value="1"/>
</dbReference>
<dbReference type="PANTHER" id="PTHR23321:SF26">
    <property type="entry name" value="SMALL RIBOSOMAL SUBUNIT PROTEIN US15M"/>
    <property type="match status" value="1"/>
</dbReference>
<dbReference type="Pfam" id="PF00312">
    <property type="entry name" value="Ribosomal_S15"/>
    <property type="match status" value="1"/>
</dbReference>
<dbReference type="SMART" id="SM01387">
    <property type="entry name" value="Ribosomal_S15"/>
    <property type="match status" value="1"/>
</dbReference>
<dbReference type="SUPFAM" id="SSF47060">
    <property type="entry name" value="S15/NS1 RNA-binding domain"/>
    <property type="match status" value="1"/>
</dbReference>
<dbReference type="PROSITE" id="PS00362">
    <property type="entry name" value="RIBOSOMAL_S15"/>
    <property type="match status" value="1"/>
</dbReference>
<proteinExistence type="inferred from homology"/>
<keyword id="KW-1185">Reference proteome</keyword>
<keyword id="KW-0687">Ribonucleoprotein</keyword>
<keyword id="KW-0689">Ribosomal protein</keyword>
<keyword id="KW-0694">RNA-binding</keyword>
<keyword id="KW-0699">rRNA-binding</keyword>
<comment type="function">
    <text evidence="1">One of the primary rRNA binding proteins, it binds directly to 16S rRNA where it helps nucleate assembly of the platform of the 30S subunit by binding and bridging several RNA helices of the 16S rRNA.</text>
</comment>
<comment type="function">
    <text evidence="1">Forms an intersubunit bridge (bridge B4) with the 23S rRNA of the 50S subunit in the ribosome.</text>
</comment>
<comment type="subunit">
    <text evidence="1">Part of the 30S ribosomal subunit. Forms a bridge to the 50S subunit in the 70S ribosome, contacting the 23S rRNA.</text>
</comment>
<comment type="similarity">
    <text evidence="1">Belongs to the universal ribosomal protein uS15 family.</text>
</comment>
<protein>
    <recommendedName>
        <fullName evidence="1">Small ribosomal subunit protein uS15</fullName>
    </recommendedName>
    <alternativeName>
        <fullName evidence="2">30S ribosomal protein S15</fullName>
    </alternativeName>
</protein>
<accession>A9WEJ6</accession>
<gene>
    <name evidence="1" type="primary">rpsO</name>
    <name type="ordered locus">Caur_2046</name>
</gene>
<organism>
    <name type="scientific">Chloroflexus aurantiacus (strain ATCC 29366 / DSM 635 / J-10-fl)</name>
    <dbReference type="NCBI Taxonomy" id="324602"/>
    <lineage>
        <taxon>Bacteria</taxon>
        <taxon>Bacillati</taxon>
        <taxon>Chloroflexota</taxon>
        <taxon>Chloroflexia</taxon>
        <taxon>Chloroflexales</taxon>
        <taxon>Chloroflexineae</taxon>
        <taxon>Chloroflexaceae</taxon>
        <taxon>Chloroflexus</taxon>
    </lineage>
</organism>
<sequence>MALEKEEKSQIINGYQIHETDTGSPEVQVALLTERINQLIEHLRVHTHDHHSRRGLLKLVGRRRRLLNYLQSKDRERYRNVINRLGLRR</sequence>
<reference key="1">
    <citation type="journal article" date="2011" name="BMC Genomics">
        <title>Complete genome sequence of the filamentous anoxygenic phototrophic bacterium Chloroflexus aurantiacus.</title>
        <authorList>
            <person name="Tang K.H."/>
            <person name="Barry K."/>
            <person name="Chertkov O."/>
            <person name="Dalin E."/>
            <person name="Han C.S."/>
            <person name="Hauser L.J."/>
            <person name="Honchak B.M."/>
            <person name="Karbach L.E."/>
            <person name="Land M.L."/>
            <person name="Lapidus A."/>
            <person name="Larimer F.W."/>
            <person name="Mikhailova N."/>
            <person name="Pitluck S."/>
            <person name="Pierson B.K."/>
            <person name="Blankenship R.E."/>
        </authorList>
    </citation>
    <scope>NUCLEOTIDE SEQUENCE [LARGE SCALE GENOMIC DNA]</scope>
    <source>
        <strain>ATCC 29366 / DSM 635 / J-10-fl</strain>
    </source>
</reference>
<evidence type="ECO:0000255" key="1">
    <source>
        <dbReference type="HAMAP-Rule" id="MF_01343"/>
    </source>
</evidence>
<evidence type="ECO:0000305" key="2"/>
<feature type="chain" id="PRO_1000086794" description="Small ribosomal subunit protein uS15">
    <location>
        <begin position="1"/>
        <end position="89"/>
    </location>
</feature>
<name>RS15_CHLAA</name>